<dbReference type="EC" id="2.7.11.1" evidence="1"/>
<dbReference type="EMBL" id="CP017626">
    <property type="protein sequence ID" value="AOW29194.1"/>
    <property type="molecule type" value="Genomic_DNA"/>
</dbReference>
<dbReference type="RefSeq" id="XP_717245.2">
    <property type="nucleotide sequence ID" value="XM_712152.2"/>
</dbReference>
<dbReference type="SMR" id="Q5A649"/>
<dbReference type="FunCoup" id="Q5A649">
    <property type="interactions" value="115"/>
</dbReference>
<dbReference type="STRING" id="237561.Q5A649"/>
<dbReference type="EnsemblFungi" id="C4_04450C_A-T">
    <property type="protein sequence ID" value="C4_04450C_A-T-p1"/>
    <property type="gene ID" value="C4_04450C_A"/>
</dbReference>
<dbReference type="GeneID" id="3641175"/>
<dbReference type="KEGG" id="cal:CAALFM_C404450CA"/>
<dbReference type="CGD" id="CAL0000188572">
    <property type="gene designation" value="ATG1"/>
</dbReference>
<dbReference type="VEuPathDB" id="FungiDB:C4_04450C_A"/>
<dbReference type="eggNOG" id="KOG0595">
    <property type="taxonomic scope" value="Eukaryota"/>
</dbReference>
<dbReference type="HOGENOM" id="CLU_006447_1_0_1"/>
<dbReference type="InParanoid" id="Q5A649"/>
<dbReference type="OrthoDB" id="346907at2759"/>
<dbReference type="PRO" id="PR:Q5A649"/>
<dbReference type="Proteomes" id="UP000000559">
    <property type="component" value="Chromosome 4"/>
</dbReference>
<dbReference type="GO" id="GO:0005776">
    <property type="term" value="C:autophagosome"/>
    <property type="evidence" value="ECO:0000314"/>
    <property type="project" value="CGD"/>
</dbReference>
<dbReference type="GO" id="GO:0005737">
    <property type="term" value="C:cytoplasm"/>
    <property type="evidence" value="ECO:0000318"/>
    <property type="project" value="GO_Central"/>
</dbReference>
<dbReference type="GO" id="GO:0005829">
    <property type="term" value="C:cytosol"/>
    <property type="evidence" value="ECO:0000318"/>
    <property type="project" value="GO_Central"/>
</dbReference>
<dbReference type="GO" id="GO:0000407">
    <property type="term" value="C:phagophore assembly site"/>
    <property type="evidence" value="ECO:0000314"/>
    <property type="project" value="CGD"/>
</dbReference>
<dbReference type="GO" id="GO:0034045">
    <property type="term" value="C:phagophore assembly site membrane"/>
    <property type="evidence" value="ECO:0000318"/>
    <property type="project" value="GO_Central"/>
</dbReference>
<dbReference type="GO" id="GO:0005524">
    <property type="term" value="F:ATP binding"/>
    <property type="evidence" value="ECO:0007669"/>
    <property type="project" value="UniProtKB-KW"/>
</dbReference>
<dbReference type="GO" id="GO:0106310">
    <property type="term" value="F:protein serine kinase activity"/>
    <property type="evidence" value="ECO:0007669"/>
    <property type="project" value="RHEA"/>
</dbReference>
<dbReference type="GO" id="GO:0004674">
    <property type="term" value="F:protein serine/threonine kinase activity"/>
    <property type="evidence" value="ECO:0000318"/>
    <property type="project" value="GO_Central"/>
</dbReference>
<dbReference type="GO" id="GO:0000045">
    <property type="term" value="P:autophagosome assembly"/>
    <property type="evidence" value="ECO:0000318"/>
    <property type="project" value="GO_Central"/>
</dbReference>
<dbReference type="GO" id="GO:0006995">
    <property type="term" value="P:cellular response to nitrogen starvation"/>
    <property type="evidence" value="ECO:0000315"/>
    <property type="project" value="CGD"/>
</dbReference>
<dbReference type="GO" id="GO:0006974">
    <property type="term" value="P:DNA damage response"/>
    <property type="evidence" value="ECO:0000315"/>
    <property type="project" value="CGD"/>
</dbReference>
<dbReference type="GO" id="GO:0044180">
    <property type="term" value="P:filamentous growth of a unicellular organism"/>
    <property type="evidence" value="ECO:0000315"/>
    <property type="project" value="CGD"/>
</dbReference>
<dbReference type="GO" id="GO:0000423">
    <property type="term" value="P:mitophagy"/>
    <property type="evidence" value="ECO:0000318"/>
    <property type="project" value="GO_Central"/>
</dbReference>
<dbReference type="GO" id="GO:0034727">
    <property type="term" value="P:piecemeal microautophagy of the nucleus"/>
    <property type="evidence" value="ECO:0000318"/>
    <property type="project" value="GO_Central"/>
</dbReference>
<dbReference type="GO" id="GO:0015031">
    <property type="term" value="P:protein transport"/>
    <property type="evidence" value="ECO:0007669"/>
    <property type="project" value="UniProtKB-KW"/>
</dbReference>
<dbReference type="GO" id="GO:0010506">
    <property type="term" value="P:regulation of autophagy"/>
    <property type="evidence" value="ECO:0000318"/>
    <property type="project" value="GO_Central"/>
</dbReference>
<dbReference type="GO" id="GO:0042594">
    <property type="term" value="P:response to starvation"/>
    <property type="evidence" value="ECO:0000318"/>
    <property type="project" value="GO_Central"/>
</dbReference>
<dbReference type="GO" id="GO:0061709">
    <property type="term" value="P:reticulophagy"/>
    <property type="evidence" value="ECO:0000318"/>
    <property type="project" value="GO_Central"/>
</dbReference>
<dbReference type="CDD" id="cd14009">
    <property type="entry name" value="STKc_ATG1_ULK_like"/>
    <property type="match status" value="1"/>
</dbReference>
<dbReference type="FunFam" id="3.30.200.20:FF:000042">
    <property type="entry name" value="Aurora kinase A"/>
    <property type="match status" value="1"/>
</dbReference>
<dbReference type="FunFam" id="1.10.510.10:FF:000817">
    <property type="entry name" value="Serine/threonine-protein kinase ATG1"/>
    <property type="match status" value="1"/>
</dbReference>
<dbReference type="Gene3D" id="3.30.200.20">
    <property type="entry name" value="Phosphorylase Kinase, domain 1"/>
    <property type="match status" value="1"/>
</dbReference>
<dbReference type="Gene3D" id="1.10.510.10">
    <property type="entry name" value="Transferase(Phosphotransferase) domain 1"/>
    <property type="match status" value="1"/>
</dbReference>
<dbReference type="InterPro" id="IPR045269">
    <property type="entry name" value="Atg1-like"/>
</dbReference>
<dbReference type="InterPro" id="IPR048941">
    <property type="entry name" value="ATG1-like_MIT2"/>
</dbReference>
<dbReference type="InterPro" id="IPR022708">
    <property type="entry name" value="Atg1-like_tMIT"/>
</dbReference>
<dbReference type="InterPro" id="IPR011009">
    <property type="entry name" value="Kinase-like_dom_sf"/>
</dbReference>
<dbReference type="InterPro" id="IPR000719">
    <property type="entry name" value="Prot_kinase_dom"/>
</dbReference>
<dbReference type="InterPro" id="IPR017441">
    <property type="entry name" value="Protein_kinase_ATP_BS"/>
</dbReference>
<dbReference type="InterPro" id="IPR008271">
    <property type="entry name" value="Ser/Thr_kinase_AS"/>
</dbReference>
<dbReference type="PANTHER" id="PTHR24348:SF22">
    <property type="entry name" value="NON-SPECIFIC SERINE_THREONINE PROTEIN KINASE"/>
    <property type="match status" value="1"/>
</dbReference>
<dbReference type="PANTHER" id="PTHR24348">
    <property type="entry name" value="SERINE/THREONINE-PROTEIN KINASE UNC-51-RELATED"/>
    <property type="match status" value="1"/>
</dbReference>
<dbReference type="Pfam" id="PF12063">
    <property type="entry name" value="ATG1-like_MIT1"/>
    <property type="match status" value="1"/>
</dbReference>
<dbReference type="Pfam" id="PF21127">
    <property type="entry name" value="ATG1-like_MIT2"/>
    <property type="match status" value="1"/>
</dbReference>
<dbReference type="Pfam" id="PF00069">
    <property type="entry name" value="Pkinase"/>
    <property type="match status" value="1"/>
</dbReference>
<dbReference type="SMART" id="SM00220">
    <property type="entry name" value="S_TKc"/>
    <property type="match status" value="1"/>
</dbReference>
<dbReference type="SUPFAM" id="SSF56112">
    <property type="entry name" value="Protein kinase-like (PK-like)"/>
    <property type="match status" value="1"/>
</dbReference>
<dbReference type="PROSITE" id="PS00107">
    <property type="entry name" value="PROTEIN_KINASE_ATP"/>
    <property type="match status" value="1"/>
</dbReference>
<dbReference type="PROSITE" id="PS50011">
    <property type="entry name" value="PROTEIN_KINASE_DOM"/>
    <property type="match status" value="1"/>
</dbReference>
<dbReference type="PROSITE" id="PS00108">
    <property type="entry name" value="PROTEIN_KINASE_ST"/>
    <property type="match status" value="1"/>
</dbReference>
<keyword id="KW-0067">ATP-binding</keyword>
<keyword id="KW-0072">Autophagy</keyword>
<keyword id="KW-0963">Cytoplasm</keyword>
<keyword id="KW-0418">Kinase</keyword>
<keyword id="KW-0472">Membrane</keyword>
<keyword id="KW-0547">Nucleotide-binding</keyword>
<keyword id="KW-0653">Protein transport</keyword>
<keyword id="KW-1185">Reference proteome</keyword>
<keyword id="KW-0723">Serine/threonine-protein kinase</keyword>
<keyword id="KW-0808">Transferase</keyword>
<keyword id="KW-0813">Transport</keyword>
<comment type="function">
    <text evidence="1">Serine/threonine protein kinase involved in the cytoplasm to vacuole transport (Cvt) and found to be essential in autophagy, where it is required for the formation of autophagosomes. Involved in the clearance of protein aggregates which cannot be efficiently cleared by the proteasome. Required for selective autophagic degradation of the nucleus (nucleophagy) as well as for mitophagy which contributes to regulate mitochondrial quantity and quality by eliminating the mitochondria to a basal level to fulfill cellular energy requirements and preventing excess ROS production. Also involved in endoplasmic reticulum-specific autophagic process, in selective removal of ER-associated degradation (ERAD) substrates. Plays a key role in ATG9 and ATG23 cycling through the pre-autophagosomal structure and is necessary to promote ATG18 binding to ATG9 through phosphorylation of ATG9. Catalyzes phosphorylation of ATG4, decreasing the interaction between ATG4 and ATG8 and impairing deconjugation of PE-conjugated forms of ATG8.</text>
</comment>
<comment type="catalytic activity">
    <reaction evidence="1">
        <text>L-seryl-[protein] + ATP = O-phospho-L-seryl-[protein] + ADP + H(+)</text>
        <dbReference type="Rhea" id="RHEA:17989"/>
        <dbReference type="Rhea" id="RHEA-COMP:9863"/>
        <dbReference type="Rhea" id="RHEA-COMP:11604"/>
        <dbReference type="ChEBI" id="CHEBI:15378"/>
        <dbReference type="ChEBI" id="CHEBI:29999"/>
        <dbReference type="ChEBI" id="CHEBI:30616"/>
        <dbReference type="ChEBI" id="CHEBI:83421"/>
        <dbReference type="ChEBI" id="CHEBI:456216"/>
        <dbReference type="EC" id="2.7.11.1"/>
    </reaction>
</comment>
<comment type="catalytic activity">
    <reaction evidence="1">
        <text>L-threonyl-[protein] + ATP = O-phospho-L-threonyl-[protein] + ADP + H(+)</text>
        <dbReference type="Rhea" id="RHEA:46608"/>
        <dbReference type="Rhea" id="RHEA-COMP:11060"/>
        <dbReference type="Rhea" id="RHEA-COMP:11605"/>
        <dbReference type="ChEBI" id="CHEBI:15378"/>
        <dbReference type="ChEBI" id="CHEBI:30013"/>
        <dbReference type="ChEBI" id="CHEBI:30616"/>
        <dbReference type="ChEBI" id="CHEBI:61977"/>
        <dbReference type="ChEBI" id="CHEBI:456216"/>
        <dbReference type="EC" id="2.7.11.1"/>
    </reaction>
</comment>
<comment type="subunit">
    <text evidence="1">Homodimer. Forms a ternary complex with ATG13 and ATG17.</text>
</comment>
<comment type="subcellular location">
    <subcellularLocation>
        <location evidence="1">Cytoplasm</location>
    </subcellularLocation>
    <subcellularLocation>
        <location evidence="1">Preautophagosomal structure membrane</location>
        <topology evidence="1">Peripheral membrane protein</topology>
    </subcellularLocation>
</comment>
<comment type="similarity">
    <text evidence="2">Belongs to the protein kinase superfamily. Ser/Thr protein kinase family. APG1/unc-51/ULK1 subfamily.</text>
</comment>
<feature type="chain" id="PRO_0000085641" description="Serine/threonine-protein kinase ATG1">
    <location>
        <begin position="1"/>
        <end position="834"/>
    </location>
</feature>
<feature type="domain" description="Protein kinase" evidence="2">
    <location>
        <begin position="58"/>
        <end position="354"/>
    </location>
</feature>
<feature type="region of interest" description="Disordered" evidence="4">
    <location>
        <begin position="1"/>
        <end position="27"/>
    </location>
</feature>
<feature type="region of interest" description="Disordered" evidence="4">
    <location>
        <begin position="394"/>
        <end position="417"/>
    </location>
</feature>
<feature type="region of interest" description="Disordered" evidence="4">
    <location>
        <begin position="483"/>
        <end position="532"/>
    </location>
</feature>
<feature type="compositionally biased region" description="Low complexity" evidence="4">
    <location>
        <begin position="401"/>
        <end position="416"/>
    </location>
</feature>
<feature type="compositionally biased region" description="Polar residues" evidence="4">
    <location>
        <begin position="495"/>
        <end position="511"/>
    </location>
</feature>
<feature type="compositionally biased region" description="Low complexity" evidence="4">
    <location>
        <begin position="513"/>
        <end position="525"/>
    </location>
</feature>
<feature type="active site" description="Proton acceptor" evidence="2 3">
    <location>
        <position position="204"/>
    </location>
</feature>
<feature type="binding site" evidence="2">
    <location>
        <begin position="64"/>
        <end position="72"/>
    </location>
    <ligand>
        <name>ATP</name>
        <dbReference type="ChEBI" id="CHEBI:30616"/>
    </ligand>
</feature>
<feature type="binding site" evidence="2">
    <location>
        <position position="87"/>
    </location>
    <ligand>
        <name>ATP</name>
        <dbReference type="ChEBI" id="CHEBI:30616"/>
    </ligand>
</feature>
<name>ATG1_CANAL</name>
<reference key="1">
    <citation type="journal article" date="2004" name="Proc. Natl. Acad. Sci. U.S.A.">
        <title>The diploid genome sequence of Candida albicans.</title>
        <authorList>
            <person name="Jones T."/>
            <person name="Federspiel N.A."/>
            <person name="Chibana H."/>
            <person name="Dungan J."/>
            <person name="Kalman S."/>
            <person name="Magee B.B."/>
            <person name="Newport G."/>
            <person name="Thorstenson Y.R."/>
            <person name="Agabian N."/>
            <person name="Magee P.T."/>
            <person name="Davis R.W."/>
            <person name="Scherer S."/>
        </authorList>
    </citation>
    <scope>NUCLEOTIDE SEQUENCE [LARGE SCALE GENOMIC DNA]</scope>
    <source>
        <strain>SC5314 / ATCC MYA-2876</strain>
    </source>
</reference>
<reference key="2">
    <citation type="journal article" date="2007" name="Genome Biol.">
        <title>Assembly of the Candida albicans genome into sixteen supercontigs aligned on the eight chromosomes.</title>
        <authorList>
            <person name="van het Hoog M."/>
            <person name="Rast T.J."/>
            <person name="Martchenko M."/>
            <person name="Grindle S."/>
            <person name="Dignard D."/>
            <person name="Hogues H."/>
            <person name="Cuomo C."/>
            <person name="Berriman M."/>
            <person name="Scherer S."/>
            <person name="Magee B.B."/>
            <person name="Whiteway M."/>
            <person name="Chibana H."/>
            <person name="Nantel A."/>
            <person name="Magee P.T."/>
        </authorList>
    </citation>
    <scope>GENOME REANNOTATION</scope>
    <source>
        <strain>SC5314 / ATCC MYA-2876</strain>
    </source>
</reference>
<reference key="3">
    <citation type="journal article" date="2013" name="Genome Biol.">
        <title>Assembly of a phased diploid Candida albicans genome facilitates allele-specific measurements and provides a simple model for repeat and indel structure.</title>
        <authorList>
            <person name="Muzzey D."/>
            <person name="Schwartz K."/>
            <person name="Weissman J.S."/>
            <person name="Sherlock G."/>
        </authorList>
    </citation>
    <scope>NUCLEOTIDE SEQUENCE [LARGE SCALE GENOMIC DNA]</scope>
    <scope>GENOME REANNOTATION</scope>
    <source>
        <strain>SC5314 / ATCC MYA-2876</strain>
    </source>
</reference>
<accession>Q5A649</accession>
<accession>A0A1D8PM27</accession>
<evidence type="ECO:0000250" key="1">
    <source>
        <dbReference type="UniProtKB" id="P53104"/>
    </source>
</evidence>
<evidence type="ECO:0000255" key="2">
    <source>
        <dbReference type="PROSITE-ProRule" id="PRU00159"/>
    </source>
</evidence>
<evidence type="ECO:0000255" key="3">
    <source>
        <dbReference type="PROSITE-ProRule" id="PRU10027"/>
    </source>
</evidence>
<evidence type="ECO:0000256" key="4">
    <source>
        <dbReference type="SAM" id="MobiDB-lite"/>
    </source>
</evidence>
<protein>
    <recommendedName>
        <fullName evidence="1">Serine/threonine-protein kinase ATG1</fullName>
        <ecNumber evidence="1">2.7.11.1</ecNumber>
    </recommendedName>
    <alternativeName>
        <fullName evidence="1">Autophagy-related protein 1</fullName>
    </alternativeName>
</protein>
<organism>
    <name type="scientific">Candida albicans (strain SC5314 / ATCC MYA-2876)</name>
    <name type="common">Yeast</name>
    <dbReference type="NCBI Taxonomy" id="237561"/>
    <lineage>
        <taxon>Eukaryota</taxon>
        <taxon>Fungi</taxon>
        <taxon>Dikarya</taxon>
        <taxon>Ascomycota</taxon>
        <taxon>Saccharomycotina</taxon>
        <taxon>Pichiomycetes</taxon>
        <taxon>Debaryomycetaceae</taxon>
        <taxon>Candida/Lodderomyces clade</taxon>
        <taxon>Candida</taxon>
    </lineage>
</organism>
<gene>
    <name type="primary">ATG1</name>
    <name type="ordered locus">CAALFM_C404450CA</name>
    <name type="ORF">CaO19.11322</name>
    <name type="ORF">CaO19.3841</name>
</gene>
<sequence length="834" mass="92910">MIPQSNPTAQRRSGDAQNTNNVAPNSVATTTDTALTASTQSGSSSNNANKKLEYIGVYKIGPEIGKGSFATVYKCIDTTNNKAVAIKSVYRSKLKSKKLLENLEIEIQILKSMKHPHIVGLLDYKQTTSYFHLVMDYCSMGDLSYFIRRRNNLVKSHPVISSLLHCYPSPEGSHGLNEVLVLHFLRQLSSALQFLRDKSLVHRDIKPQNLLLCPPVHSKQEFIDGEFVGMWELPILKIADFGFARFLPSTSMAETLCGSPLYMAPEILRYEKYNAKADLWSVGAVLYEMTVGKPPFKAGNHIELLKNIEKANDKIKFPSAAQVPEPLKQLIRSLLKYNPTERISFNEFFNDSLITCDLDDNDQPLETSQMDENLFISEYISPIAPAERSQFFKEQKKNDSVVRSPSPTTATTATPRQDNVVQQMTKITSPVPDDFALSIARNSSEFNLKKDDMNLEKDYVVVEKRAVEVNALADELAHAGAGADAIPNSRKNSDVDQTNRLASSQQQTETASYRRSSSSGSQKRPSFSERRISLSLSPTNALTKAIGLASNRLFGLTTNSSHSNVSAIAEDDDSSTSNNDASSFSTVIPSTNNHVLLQKLNLATIGEPGTEFDLGSVSNLDEQILDKLELIANIANAVNLYADVKFSQIIPSPPSSDGIEDDTEMLPPKIIHMISQEGIGLYIKTLSLLGRAMDIAGQWWFEKYDAVHGERPSFETTVRINQIVQWIREKYNISLERLEFLKSKSDFTAEETIEDNEPNGTTRVQQAIFAAALGIARETALKELLRNSTDIECSYVTSIYMLLAILEDLEESDRQEVKKIIEKINSRLKNFMGK</sequence>
<proteinExistence type="inferred from homology"/>